<comment type="function">
    <text evidence="1">Core subunit of the mitochondrial membrane respiratory chain NADH dehydrogenase (Complex I) which catalyzes electron transfer from NADH through the respiratory chain, using ubiquinone as an electron acceptor. Essential for the catalytic activity and assembly of complex I.</text>
</comment>
<comment type="catalytic activity">
    <reaction evidence="1">
        <text>a ubiquinone + NADH + 5 H(+)(in) = a ubiquinol + NAD(+) + 4 H(+)(out)</text>
        <dbReference type="Rhea" id="RHEA:29091"/>
        <dbReference type="Rhea" id="RHEA-COMP:9565"/>
        <dbReference type="Rhea" id="RHEA-COMP:9566"/>
        <dbReference type="ChEBI" id="CHEBI:15378"/>
        <dbReference type="ChEBI" id="CHEBI:16389"/>
        <dbReference type="ChEBI" id="CHEBI:17976"/>
        <dbReference type="ChEBI" id="CHEBI:57540"/>
        <dbReference type="ChEBI" id="CHEBI:57945"/>
        <dbReference type="EC" id="7.1.1.2"/>
    </reaction>
</comment>
<comment type="subunit">
    <text evidence="2">Core subunit of respiratory chain NADH dehydrogenase (Complex I) which is composed of 45 different subunits.</text>
</comment>
<comment type="subcellular location">
    <subcellularLocation>
        <location evidence="2">Mitochondrion inner membrane</location>
        <topology evidence="3">Multi-pass membrane protein</topology>
    </subcellularLocation>
</comment>
<comment type="similarity">
    <text evidence="4">Belongs to the complex I subunit 1 family.</text>
</comment>
<dbReference type="EC" id="7.1.1.2" evidence="1"/>
<dbReference type="EMBL" id="AJ002189">
    <property type="protein sequence ID" value="CAA05229.1"/>
    <property type="molecule type" value="Genomic_DNA"/>
</dbReference>
<dbReference type="EMBL" id="AF034253">
    <property type="protein sequence ID" value="AAD34185.1"/>
    <property type="molecule type" value="Genomic_DNA"/>
</dbReference>
<dbReference type="PIR" id="T10972">
    <property type="entry name" value="T10972"/>
</dbReference>
<dbReference type="RefSeq" id="NP_008634.1">
    <property type="nucleotide sequence ID" value="NC_000845.1"/>
</dbReference>
<dbReference type="PDB" id="5GPN">
    <property type="method" value="EM"/>
    <property type="resolution" value="5.40 A"/>
    <property type="chains" value="e=1-318"/>
</dbReference>
<dbReference type="PDB" id="5GUP">
    <property type="method" value="EM"/>
    <property type="resolution" value="4.00 A"/>
    <property type="chains" value="r=1-318"/>
</dbReference>
<dbReference type="PDB" id="7V2C">
    <property type="method" value="EM"/>
    <property type="resolution" value="2.90 A"/>
    <property type="chains" value="s=1-318"/>
</dbReference>
<dbReference type="PDB" id="7V2D">
    <property type="method" value="EM"/>
    <property type="resolution" value="3.30 A"/>
    <property type="chains" value="s=1-318"/>
</dbReference>
<dbReference type="PDB" id="7V2E">
    <property type="method" value="EM"/>
    <property type="resolution" value="2.80 A"/>
    <property type="chains" value="s=1-318"/>
</dbReference>
<dbReference type="PDB" id="7V2F">
    <property type="method" value="EM"/>
    <property type="resolution" value="3.10 A"/>
    <property type="chains" value="s=1-318"/>
</dbReference>
<dbReference type="PDB" id="7V2H">
    <property type="method" value="EM"/>
    <property type="resolution" value="2.50 A"/>
    <property type="chains" value="s=1-318"/>
</dbReference>
<dbReference type="PDB" id="7V2K">
    <property type="method" value="EM"/>
    <property type="resolution" value="2.70 A"/>
    <property type="chains" value="s=1-318"/>
</dbReference>
<dbReference type="PDB" id="7V2R">
    <property type="method" value="EM"/>
    <property type="resolution" value="2.60 A"/>
    <property type="chains" value="s=1-318"/>
</dbReference>
<dbReference type="PDB" id="7V30">
    <property type="method" value="EM"/>
    <property type="resolution" value="2.70 A"/>
    <property type="chains" value="s=1-318"/>
</dbReference>
<dbReference type="PDB" id="7V31">
    <property type="method" value="EM"/>
    <property type="resolution" value="2.90 A"/>
    <property type="chains" value="s=1-318"/>
</dbReference>
<dbReference type="PDB" id="7V32">
    <property type="method" value="EM"/>
    <property type="resolution" value="3.20 A"/>
    <property type="chains" value="s=1-318"/>
</dbReference>
<dbReference type="PDB" id="7V33">
    <property type="method" value="EM"/>
    <property type="resolution" value="2.60 A"/>
    <property type="chains" value="s=1-318"/>
</dbReference>
<dbReference type="PDB" id="7V3M">
    <property type="method" value="EM"/>
    <property type="resolution" value="2.90 A"/>
    <property type="chains" value="s=1-318"/>
</dbReference>
<dbReference type="PDB" id="7VBL">
    <property type="method" value="EM"/>
    <property type="resolution" value="2.60 A"/>
    <property type="chains" value="s=1-318"/>
</dbReference>
<dbReference type="PDB" id="7VBP">
    <property type="method" value="EM"/>
    <property type="resolution" value="2.80 A"/>
    <property type="chains" value="s=1-318"/>
</dbReference>
<dbReference type="PDB" id="7VC0">
    <property type="method" value="EM"/>
    <property type="resolution" value="2.60 A"/>
    <property type="chains" value="s=1-318"/>
</dbReference>
<dbReference type="PDB" id="7VWL">
    <property type="method" value="EM"/>
    <property type="resolution" value="2.70 A"/>
    <property type="chains" value="s=1-318"/>
</dbReference>
<dbReference type="PDB" id="7VXS">
    <property type="method" value="EM"/>
    <property type="resolution" value="2.90 A"/>
    <property type="chains" value="s=1-318"/>
</dbReference>
<dbReference type="PDB" id="7VY1">
    <property type="method" value="EM"/>
    <property type="resolution" value="3.30 A"/>
    <property type="chains" value="s=1-318"/>
</dbReference>
<dbReference type="PDB" id="7VY9">
    <property type="method" value="EM"/>
    <property type="resolution" value="2.90 A"/>
    <property type="chains" value="s=1-318"/>
</dbReference>
<dbReference type="PDB" id="7VYE">
    <property type="method" value="EM"/>
    <property type="resolution" value="3.10 A"/>
    <property type="chains" value="s=1-318"/>
</dbReference>
<dbReference type="PDB" id="7VYG">
    <property type="method" value="EM"/>
    <property type="resolution" value="2.90 A"/>
    <property type="chains" value="s=1-318"/>
</dbReference>
<dbReference type="PDB" id="7VYI">
    <property type="method" value="EM"/>
    <property type="resolution" value="3.10 A"/>
    <property type="chains" value="s=1-318"/>
</dbReference>
<dbReference type="PDB" id="7VYS">
    <property type="method" value="EM"/>
    <property type="resolution" value="2.50 A"/>
    <property type="chains" value="s=1-318"/>
</dbReference>
<dbReference type="PDB" id="7VZ8">
    <property type="method" value="EM"/>
    <property type="resolution" value="2.70 A"/>
    <property type="chains" value="s=1-318"/>
</dbReference>
<dbReference type="PDB" id="7VZV">
    <property type="method" value="EM"/>
    <property type="resolution" value="3.20 A"/>
    <property type="chains" value="s=1-318"/>
</dbReference>
<dbReference type="PDB" id="7VZW">
    <property type="method" value="EM"/>
    <property type="resolution" value="3.20 A"/>
    <property type="chains" value="s=1-318"/>
</dbReference>
<dbReference type="PDB" id="7W00">
    <property type="method" value="EM"/>
    <property type="resolution" value="3.50 A"/>
    <property type="chains" value="s=1-318"/>
</dbReference>
<dbReference type="PDB" id="7W0H">
    <property type="method" value="EM"/>
    <property type="resolution" value="3.40 A"/>
    <property type="chains" value="s=1-318"/>
</dbReference>
<dbReference type="PDB" id="7W0R">
    <property type="method" value="EM"/>
    <property type="resolution" value="2.80 A"/>
    <property type="chains" value="s=1-318"/>
</dbReference>
<dbReference type="PDB" id="7W0Y">
    <property type="method" value="EM"/>
    <property type="resolution" value="3.40 A"/>
    <property type="chains" value="s=1-318"/>
</dbReference>
<dbReference type="PDB" id="7W1O">
    <property type="method" value="EM"/>
    <property type="resolution" value="3.50 A"/>
    <property type="chains" value="s=1-318"/>
</dbReference>
<dbReference type="PDB" id="7W1P">
    <property type="method" value="EM"/>
    <property type="resolution" value="3.10 A"/>
    <property type="chains" value="s=1-318"/>
</dbReference>
<dbReference type="PDB" id="7W1T">
    <property type="method" value="EM"/>
    <property type="resolution" value="3.00 A"/>
    <property type="chains" value="s=1-318"/>
</dbReference>
<dbReference type="PDB" id="7W1U">
    <property type="method" value="EM"/>
    <property type="resolution" value="3.20 A"/>
    <property type="chains" value="s=1-318"/>
</dbReference>
<dbReference type="PDB" id="7W1V">
    <property type="method" value="EM"/>
    <property type="resolution" value="3.00 A"/>
    <property type="chains" value="s=1-318"/>
</dbReference>
<dbReference type="PDB" id="7W1Z">
    <property type="method" value="EM"/>
    <property type="resolution" value="2.60 A"/>
    <property type="chains" value="s=1-318"/>
</dbReference>
<dbReference type="PDB" id="7W20">
    <property type="method" value="EM"/>
    <property type="resolution" value="3.00 A"/>
    <property type="chains" value="s=1-318"/>
</dbReference>
<dbReference type="PDB" id="7W2K">
    <property type="method" value="EM"/>
    <property type="resolution" value="2.90 A"/>
    <property type="chains" value="s=1-318"/>
</dbReference>
<dbReference type="PDB" id="7W2L">
    <property type="method" value="EM"/>
    <property type="resolution" value="3.00 A"/>
    <property type="chains" value="s=1-318"/>
</dbReference>
<dbReference type="PDB" id="7W2R">
    <property type="method" value="EM"/>
    <property type="resolution" value="2.90 A"/>
    <property type="chains" value="s=1-318"/>
</dbReference>
<dbReference type="PDB" id="7W2U">
    <property type="method" value="EM"/>
    <property type="resolution" value="2.60 A"/>
    <property type="chains" value="s=1-318"/>
</dbReference>
<dbReference type="PDB" id="7W2Y">
    <property type="method" value="EM"/>
    <property type="resolution" value="2.70 A"/>
    <property type="chains" value="s=1-318"/>
</dbReference>
<dbReference type="PDB" id="7W31">
    <property type="method" value="EM"/>
    <property type="resolution" value="3.10 A"/>
    <property type="chains" value="s=1-318"/>
</dbReference>
<dbReference type="PDB" id="7W32">
    <property type="method" value="EM"/>
    <property type="resolution" value="2.90 A"/>
    <property type="chains" value="s=1-318"/>
</dbReference>
<dbReference type="PDB" id="7W35">
    <property type="method" value="EM"/>
    <property type="resolution" value="3.00 A"/>
    <property type="chains" value="s=1-318"/>
</dbReference>
<dbReference type="PDB" id="7W4C">
    <property type="method" value="EM"/>
    <property type="resolution" value="2.70 A"/>
    <property type="chains" value="s=1-318"/>
</dbReference>
<dbReference type="PDB" id="7W4D">
    <property type="method" value="EM"/>
    <property type="resolution" value="3.00 A"/>
    <property type="chains" value="s=1-318"/>
</dbReference>
<dbReference type="PDB" id="7W4E">
    <property type="method" value="EM"/>
    <property type="resolution" value="3.00 A"/>
    <property type="chains" value="s=1-318"/>
</dbReference>
<dbReference type="PDB" id="7W4F">
    <property type="method" value="EM"/>
    <property type="resolution" value="2.70 A"/>
    <property type="chains" value="s=1-318"/>
</dbReference>
<dbReference type="PDB" id="7W4G">
    <property type="method" value="EM"/>
    <property type="resolution" value="3.10 A"/>
    <property type="chains" value="s=1-318"/>
</dbReference>
<dbReference type="PDB" id="7W4J">
    <property type="method" value="EM"/>
    <property type="resolution" value="3.20 A"/>
    <property type="chains" value="s=1-318"/>
</dbReference>
<dbReference type="PDB" id="7W4K">
    <property type="method" value="EM"/>
    <property type="resolution" value="3.20 A"/>
    <property type="chains" value="s=1-318"/>
</dbReference>
<dbReference type="PDB" id="7W4L">
    <property type="method" value="EM"/>
    <property type="resolution" value="3.10 A"/>
    <property type="chains" value="s=1-318"/>
</dbReference>
<dbReference type="PDB" id="7W4M">
    <property type="method" value="EM"/>
    <property type="resolution" value="3.30 A"/>
    <property type="chains" value="s=1-318"/>
</dbReference>
<dbReference type="PDB" id="7W4N">
    <property type="method" value="EM"/>
    <property type="resolution" value="3.00 A"/>
    <property type="chains" value="s=1-318"/>
</dbReference>
<dbReference type="PDB" id="7W4Q">
    <property type="method" value="EM"/>
    <property type="resolution" value="3.30 A"/>
    <property type="chains" value="s=1-318"/>
</dbReference>
<dbReference type="PDBsum" id="5GPN"/>
<dbReference type="PDBsum" id="5GUP"/>
<dbReference type="PDBsum" id="7V2C"/>
<dbReference type="PDBsum" id="7V2D"/>
<dbReference type="PDBsum" id="7V2E"/>
<dbReference type="PDBsum" id="7V2F"/>
<dbReference type="PDBsum" id="7V2H"/>
<dbReference type="PDBsum" id="7V2K"/>
<dbReference type="PDBsum" id="7V2R"/>
<dbReference type="PDBsum" id="7V30"/>
<dbReference type="PDBsum" id="7V31"/>
<dbReference type="PDBsum" id="7V32"/>
<dbReference type="PDBsum" id="7V33"/>
<dbReference type="PDBsum" id="7V3M"/>
<dbReference type="PDBsum" id="7VBL"/>
<dbReference type="PDBsum" id="7VBP"/>
<dbReference type="PDBsum" id="7VC0"/>
<dbReference type="PDBsum" id="7VWL"/>
<dbReference type="PDBsum" id="7VXS"/>
<dbReference type="PDBsum" id="7VY1"/>
<dbReference type="PDBsum" id="7VY9"/>
<dbReference type="PDBsum" id="7VYE"/>
<dbReference type="PDBsum" id="7VYG"/>
<dbReference type="PDBsum" id="7VYI"/>
<dbReference type="PDBsum" id="7VYS"/>
<dbReference type="PDBsum" id="7VZ8"/>
<dbReference type="PDBsum" id="7VZV"/>
<dbReference type="PDBsum" id="7VZW"/>
<dbReference type="PDBsum" id="7W00"/>
<dbReference type="PDBsum" id="7W0H"/>
<dbReference type="PDBsum" id="7W0R"/>
<dbReference type="PDBsum" id="7W0Y"/>
<dbReference type="PDBsum" id="7W1O"/>
<dbReference type="PDBsum" id="7W1P"/>
<dbReference type="PDBsum" id="7W1T"/>
<dbReference type="PDBsum" id="7W1U"/>
<dbReference type="PDBsum" id="7W1V"/>
<dbReference type="PDBsum" id="7W1Z"/>
<dbReference type="PDBsum" id="7W20"/>
<dbReference type="PDBsum" id="7W2K"/>
<dbReference type="PDBsum" id="7W2L"/>
<dbReference type="PDBsum" id="7W2R"/>
<dbReference type="PDBsum" id="7W2U"/>
<dbReference type="PDBsum" id="7W2Y"/>
<dbReference type="PDBsum" id="7W31"/>
<dbReference type="PDBsum" id="7W32"/>
<dbReference type="PDBsum" id="7W35"/>
<dbReference type="PDBsum" id="7W4C"/>
<dbReference type="PDBsum" id="7W4D"/>
<dbReference type="PDBsum" id="7W4E"/>
<dbReference type="PDBsum" id="7W4F"/>
<dbReference type="PDBsum" id="7W4G"/>
<dbReference type="PDBsum" id="7W4J"/>
<dbReference type="PDBsum" id="7W4K"/>
<dbReference type="PDBsum" id="7W4L"/>
<dbReference type="PDBsum" id="7W4M"/>
<dbReference type="PDBsum" id="7W4N"/>
<dbReference type="PDBsum" id="7W4Q"/>
<dbReference type="EMDB" id="EMD-31881"/>
<dbReference type="EMDB" id="EMD-31884"/>
<dbReference type="EMDB" id="EMD-31887"/>
<dbReference type="EMDB" id="EMD-32155"/>
<dbReference type="EMDB" id="EMD-32187"/>
<dbReference type="EMDB" id="EMD-32191"/>
<dbReference type="EMDB" id="EMD-32197"/>
<dbReference type="EMDB" id="EMD-32202"/>
<dbReference type="EMDB" id="EMD-32204"/>
<dbReference type="EMDB" id="EMD-32206"/>
<dbReference type="EMDB" id="EMD-32214"/>
<dbReference type="EMDB" id="EMD-32222"/>
<dbReference type="EMDB" id="EMD-32230"/>
<dbReference type="EMDB" id="EMD-32231"/>
<dbReference type="EMDB" id="EMD-32232"/>
<dbReference type="EMDB" id="EMD-32242"/>
<dbReference type="EMDB" id="EMD-32248"/>
<dbReference type="EMDB" id="EMD-32249"/>
<dbReference type="EMDB" id="EMD-32253"/>
<dbReference type="EMDB" id="EMD-32254"/>
<dbReference type="EMDB" id="EMD-32255"/>
<dbReference type="EMDB" id="EMD-32256"/>
<dbReference type="EMDB" id="EMD-32257"/>
<dbReference type="EMDB" id="EMD-32259"/>
<dbReference type="EMDB" id="EMD-32260"/>
<dbReference type="EMDB" id="EMD-32263"/>
<dbReference type="EMDB" id="EMD-32264"/>
<dbReference type="EMDB" id="EMD-32265"/>
<dbReference type="EMDB" id="EMD-32266"/>
<dbReference type="EMDB" id="EMD-32267"/>
<dbReference type="EMDB" id="EMD-32269"/>
<dbReference type="EMDB" id="EMD-32270"/>
<dbReference type="EMDB" id="EMD-32271"/>
<dbReference type="EMDB" id="EMD-32300"/>
<dbReference type="EMDB" id="EMD-32301"/>
<dbReference type="EMDB" id="EMD-32302"/>
<dbReference type="EMDB" id="EMD-32303"/>
<dbReference type="EMDB" id="EMD-32304"/>
<dbReference type="EMDB" id="EMD-32305"/>
<dbReference type="EMDB" id="EMD-32306"/>
<dbReference type="EMDB" id="EMD-32307"/>
<dbReference type="EMDB" id="EMD-32308"/>
<dbReference type="EMDB" id="EMD-32309"/>
<dbReference type="EMDB" id="EMD-32312"/>
<dbReference type="EMDB" id="EMD-9534"/>
<dbReference type="EMDB" id="EMD-9539"/>
<dbReference type="SMR" id="O79874"/>
<dbReference type="FunCoup" id="O79874">
    <property type="interactions" value="107"/>
</dbReference>
<dbReference type="STRING" id="9823.ENSSSCP00000019135"/>
<dbReference type="PaxDb" id="9823-ENSSSCP00000019135"/>
<dbReference type="PeptideAtlas" id="O79874"/>
<dbReference type="GeneID" id="808501"/>
<dbReference type="KEGG" id="ssc:808501"/>
<dbReference type="CTD" id="4535"/>
<dbReference type="eggNOG" id="KOG4770">
    <property type="taxonomic scope" value="Eukaryota"/>
</dbReference>
<dbReference type="HOGENOM" id="CLU_015134_0_1_1"/>
<dbReference type="InParanoid" id="O79874"/>
<dbReference type="OrthoDB" id="531329at2759"/>
<dbReference type="TreeFam" id="TF352957"/>
<dbReference type="ChiTaRS" id="ND1">
    <property type="organism name" value="pig"/>
</dbReference>
<dbReference type="Proteomes" id="UP000008227">
    <property type="component" value="Mitochondrion"/>
</dbReference>
<dbReference type="Proteomes" id="UP000314985">
    <property type="component" value="Mitochondrion"/>
</dbReference>
<dbReference type="Proteomes" id="UP000694570">
    <property type="component" value="Unplaced"/>
</dbReference>
<dbReference type="Proteomes" id="UP000694571">
    <property type="component" value="Unplaced"/>
</dbReference>
<dbReference type="Proteomes" id="UP000694720">
    <property type="component" value="Unplaced"/>
</dbReference>
<dbReference type="Proteomes" id="UP000694722">
    <property type="component" value="Unplaced"/>
</dbReference>
<dbReference type="Proteomes" id="UP000694723">
    <property type="component" value="Unplaced"/>
</dbReference>
<dbReference type="Proteomes" id="UP000694724">
    <property type="component" value="Unplaced"/>
</dbReference>
<dbReference type="Proteomes" id="UP000694725">
    <property type="component" value="Unplaced"/>
</dbReference>
<dbReference type="Proteomes" id="UP000694726">
    <property type="component" value="Unplaced"/>
</dbReference>
<dbReference type="Proteomes" id="UP000694727">
    <property type="component" value="Unplaced"/>
</dbReference>
<dbReference type="Proteomes" id="UP000694728">
    <property type="component" value="Unplaced"/>
</dbReference>
<dbReference type="GO" id="GO:0005743">
    <property type="term" value="C:mitochondrial inner membrane"/>
    <property type="evidence" value="ECO:0000250"/>
    <property type="project" value="UniProtKB"/>
</dbReference>
<dbReference type="GO" id="GO:0045271">
    <property type="term" value="C:respiratory chain complex I"/>
    <property type="evidence" value="ECO:0000318"/>
    <property type="project" value="GO_Central"/>
</dbReference>
<dbReference type="GO" id="GO:0008137">
    <property type="term" value="F:NADH dehydrogenase (ubiquinone) activity"/>
    <property type="evidence" value="ECO:0000250"/>
    <property type="project" value="UniProtKB"/>
</dbReference>
<dbReference type="GO" id="GO:0009060">
    <property type="term" value="P:aerobic respiration"/>
    <property type="evidence" value="ECO:0000318"/>
    <property type="project" value="GO_Central"/>
</dbReference>
<dbReference type="GO" id="GO:0006120">
    <property type="term" value="P:mitochondrial electron transport, NADH to ubiquinone"/>
    <property type="evidence" value="ECO:0000250"/>
    <property type="project" value="UniProtKB"/>
</dbReference>
<dbReference type="GO" id="GO:0032981">
    <property type="term" value="P:mitochondrial respiratory chain complex I assembly"/>
    <property type="evidence" value="ECO:0000250"/>
    <property type="project" value="UniProtKB"/>
</dbReference>
<dbReference type="HAMAP" id="MF_01350">
    <property type="entry name" value="NDH1_NuoH"/>
    <property type="match status" value="1"/>
</dbReference>
<dbReference type="InterPro" id="IPR001694">
    <property type="entry name" value="NADH_UbQ_OxRdtase_su1/FPO"/>
</dbReference>
<dbReference type="InterPro" id="IPR018086">
    <property type="entry name" value="NADH_UbQ_OxRdtase_su1_CS"/>
</dbReference>
<dbReference type="PANTHER" id="PTHR11432">
    <property type="entry name" value="NADH DEHYDROGENASE SUBUNIT 1"/>
    <property type="match status" value="1"/>
</dbReference>
<dbReference type="PANTHER" id="PTHR11432:SF3">
    <property type="entry name" value="NADH-UBIQUINONE OXIDOREDUCTASE CHAIN 1"/>
    <property type="match status" value="1"/>
</dbReference>
<dbReference type="Pfam" id="PF00146">
    <property type="entry name" value="NADHdh"/>
    <property type="match status" value="1"/>
</dbReference>
<dbReference type="PROSITE" id="PS00667">
    <property type="entry name" value="COMPLEX1_ND1_1"/>
    <property type="match status" value="1"/>
</dbReference>
<dbReference type="PROSITE" id="PS00668">
    <property type="entry name" value="COMPLEX1_ND1_2"/>
    <property type="match status" value="1"/>
</dbReference>
<protein>
    <recommendedName>
        <fullName>NADH-ubiquinone oxidoreductase chain 1</fullName>
        <ecNumber evidence="1">7.1.1.2</ecNumber>
    </recommendedName>
    <alternativeName>
        <fullName>NADH dehydrogenase subunit 1</fullName>
    </alternativeName>
</protein>
<accession>O79874</accession>
<accession>Q9TDR5</accession>
<sequence>MFMINILSLIIPILLAVAFLTLVERKVLGYMQLRKGPNVVGPYGLLQPIADALKLFTKEPLRPATSSISMFIIAPILALSLALTMWVPLPMPYPLINMNLGVLFMLAMSSLAVYSILWSGWASNSKYALIGALRAVAQTISYEVTLAIILLSVLLMNGSYTLSTLITTQEHIWMIFTSWPLAMMWFISTLAETNRAPFDLTEGESELVSGFNVEYAAGPFAMFFMAEYANIIMMNAFTAILFLGASHDPHTPELYTINFVLKTLALTITFLWIRASYPRFRYDQLMHLLWKSFLPLTLALCMWHISLPIMTASIPPQS</sequence>
<geneLocation type="mitochondrion"/>
<feature type="chain" id="PRO_0000117457" description="NADH-ubiquinone oxidoreductase chain 1">
    <location>
        <begin position="1"/>
        <end position="318"/>
    </location>
</feature>
<feature type="transmembrane region" description="Helical" evidence="3">
    <location>
        <begin position="2"/>
        <end position="22"/>
    </location>
</feature>
<feature type="transmembrane region" description="Helical" evidence="3">
    <location>
        <begin position="68"/>
        <end position="88"/>
    </location>
</feature>
<feature type="transmembrane region" description="Helical" evidence="3">
    <location>
        <begin position="100"/>
        <end position="120"/>
    </location>
</feature>
<feature type="transmembrane region" description="Helical" evidence="3">
    <location>
        <begin position="146"/>
        <end position="166"/>
    </location>
</feature>
<feature type="transmembrane region" description="Helical" evidence="3">
    <location>
        <begin position="171"/>
        <end position="191"/>
    </location>
</feature>
<feature type="transmembrane region" description="Helical" evidence="3">
    <location>
        <begin position="223"/>
        <end position="243"/>
    </location>
</feature>
<feature type="transmembrane region" description="Helical" evidence="3">
    <location>
        <begin position="253"/>
        <end position="273"/>
    </location>
</feature>
<feature type="transmembrane region" description="Helical" evidence="3">
    <location>
        <begin position="294"/>
        <end position="314"/>
    </location>
</feature>
<feature type="sequence conflict" description="In Ref. 2; AAD34185." evidence="4" ref="2">
    <original>F</original>
    <variation>V</variation>
    <location>
        <position position="56"/>
    </location>
</feature>
<feature type="sequence conflict" description="In Ref. 2; AAD34185." evidence="4" ref="2">
    <original>A</original>
    <variation>G</variation>
    <location>
        <position position="64"/>
    </location>
</feature>
<feature type="sequence conflict" description="In Ref. 2; AAD34185." evidence="4" ref="2">
    <original>A</original>
    <variation>G</variation>
    <location>
        <position position="78"/>
    </location>
</feature>
<feature type="helix" evidence="5">
    <location>
        <begin position="2"/>
        <end position="30"/>
    </location>
</feature>
<feature type="turn" evidence="5">
    <location>
        <begin position="31"/>
        <end position="33"/>
    </location>
</feature>
<feature type="turn" evidence="5">
    <location>
        <begin position="39"/>
        <end position="41"/>
    </location>
</feature>
<feature type="helix" evidence="5">
    <location>
        <begin position="42"/>
        <end position="44"/>
    </location>
</feature>
<feature type="helix" evidence="5">
    <location>
        <begin position="47"/>
        <end position="56"/>
    </location>
</feature>
<feature type="strand" evidence="6">
    <location>
        <begin position="64"/>
        <end position="66"/>
    </location>
</feature>
<feature type="helix" evidence="5">
    <location>
        <begin position="68"/>
        <end position="84"/>
    </location>
</feature>
<feature type="turn" evidence="5">
    <location>
        <begin position="85"/>
        <end position="88"/>
    </location>
</feature>
<feature type="strand" evidence="5">
    <location>
        <begin position="91"/>
        <end position="93"/>
    </location>
</feature>
<feature type="helix" evidence="5">
    <location>
        <begin position="101"/>
        <end position="122"/>
    </location>
</feature>
<feature type="helix" evidence="5">
    <location>
        <begin position="126"/>
        <end position="154"/>
    </location>
</feature>
<feature type="turn" evidence="5">
    <location>
        <begin position="155"/>
        <end position="157"/>
    </location>
</feature>
<feature type="strand" evidence="5">
    <location>
        <begin position="158"/>
        <end position="160"/>
    </location>
</feature>
<feature type="helix" evidence="5">
    <location>
        <begin position="164"/>
        <end position="168"/>
    </location>
</feature>
<feature type="strand" evidence="5">
    <location>
        <begin position="170"/>
        <end position="172"/>
    </location>
</feature>
<feature type="helix" evidence="5">
    <location>
        <begin position="175"/>
        <end position="192"/>
    </location>
</feature>
<feature type="turn" evidence="5">
    <location>
        <begin position="200"/>
        <end position="202"/>
    </location>
</feature>
<feature type="helix" evidence="5">
    <location>
        <begin position="204"/>
        <end position="207"/>
    </location>
</feature>
<feature type="helix" evidence="5">
    <location>
        <begin position="210"/>
        <end position="212"/>
    </location>
</feature>
<feature type="helix" evidence="5">
    <location>
        <begin position="217"/>
        <end position="242"/>
    </location>
</feature>
<feature type="helix" evidence="5">
    <location>
        <begin position="253"/>
        <end position="276"/>
    </location>
</feature>
<feature type="helix" evidence="5">
    <location>
        <begin position="282"/>
        <end position="291"/>
    </location>
</feature>
<feature type="helix" evidence="5">
    <location>
        <begin position="293"/>
        <end position="310"/>
    </location>
</feature>
<organism>
    <name type="scientific">Sus scrofa</name>
    <name type="common">Pig</name>
    <dbReference type="NCBI Taxonomy" id="9823"/>
    <lineage>
        <taxon>Eukaryota</taxon>
        <taxon>Metazoa</taxon>
        <taxon>Chordata</taxon>
        <taxon>Craniata</taxon>
        <taxon>Vertebrata</taxon>
        <taxon>Euteleostomi</taxon>
        <taxon>Mammalia</taxon>
        <taxon>Eutheria</taxon>
        <taxon>Laurasiatheria</taxon>
        <taxon>Artiodactyla</taxon>
        <taxon>Suina</taxon>
        <taxon>Suidae</taxon>
        <taxon>Sus</taxon>
    </lineage>
</organism>
<proteinExistence type="evidence at protein level"/>
<keyword id="KW-0002">3D-structure</keyword>
<keyword id="KW-0249">Electron transport</keyword>
<keyword id="KW-0472">Membrane</keyword>
<keyword id="KW-0496">Mitochondrion</keyword>
<keyword id="KW-0999">Mitochondrion inner membrane</keyword>
<keyword id="KW-0520">NAD</keyword>
<keyword id="KW-1185">Reference proteome</keyword>
<keyword id="KW-0679">Respiratory chain</keyword>
<keyword id="KW-1278">Translocase</keyword>
<keyword id="KW-0812">Transmembrane</keyword>
<keyword id="KW-1133">Transmembrane helix</keyword>
<keyword id="KW-0813">Transport</keyword>
<keyword id="KW-0830">Ubiquinone</keyword>
<name>NU1M_PIG</name>
<reference key="1">
    <citation type="journal article" date="1998" name="J. Mol. Evol.">
        <title>The complete mitochondrial DNA sequence of the pig (Sus scrofa).</title>
        <authorList>
            <person name="Ursing B.M."/>
            <person name="Arnason U."/>
        </authorList>
    </citation>
    <scope>NUCLEOTIDE SEQUENCE [GENOMIC DNA]</scope>
</reference>
<reference key="2">
    <citation type="journal article" date="1999" name="Gene">
        <title>Complete nucleotide sequence of pig (Sus scrofa) mitochondrial genome and dating evolutionary divergence within artiodactyla.</title>
        <authorList>
            <person name="Lin C.S."/>
            <person name="Sun Y.L."/>
            <person name="Liu C.Y."/>
            <person name="Yang P.C."/>
            <person name="Chang L.C."/>
            <person name="Cheng I.C."/>
            <person name="Mao S.J.T."/>
            <person name="Huang M.C."/>
        </authorList>
    </citation>
    <scope>NUCLEOTIDE SEQUENCE [LARGE SCALE GENOMIC DNA]</scope>
    <source>
        <strain>Landrace</strain>
    </source>
</reference>
<gene>
    <name type="primary">MT-ND1</name>
    <name type="synonym">MTND1</name>
    <name type="synonym">NADH1</name>
    <name type="synonym">ND1</name>
</gene>
<evidence type="ECO:0000250" key="1">
    <source>
        <dbReference type="UniProtKB" id="P03886"/>
    </source>
</evidence>
<evidence type="ECO:0000250" key="2">
    <source>
        <dbReference type="UniProtKB" id="P03887"/>
    </source>
</evidence>
<evidence type="ECO:0000255" key="3"/>
<evidence type="ECO:0000305" key="4"/>
<evidence type="ECO:0007829" key="5">
    <source>
        <dbReference type="PDB" id="7V2H"/>
    </source>
</evidence>
<evidence type="ECO:0007829" key="6">
    <source>
        <dbReference type="PDB" id="7V2R"/>
    </source>
</evidence>